<organism>
    <name type="scientific">Staphylococcus aureus (strain bovine RF122 / ET3-1)</name>
    <dbReference type="NCBI Taxonomy" id="273036"/>
    <lineage>
        <taxon>Bacteria</taxon>
        <taxon>Bacillati</taxon>
        <taxon>Bacillota</taxon>
        <taxon>Bacilli</taxon>
        <taxon>Bacillales</taxon>
        <taxon>Staphylococcaceae</taxon>
        <taxon>Staphylococcus</taxon>
    </lineage>
</organism>
<keyword id="KW-0029">Amino-acid transport</keyword>
<keyword id="KW-0067">ATP-binding</keyword>
<keyword id="KW-1003">Cell membrane</keyword>
<keyword id="KW-0472">Membrane</keyword>
<keyword id="KW-0547">Nucleotide-binding</keyword>
<keyword id="KW-1278">Translocase</keyword>
<keyword id="KW-0813">Transport</keyword>
<comment type="function">
    <text evidence="1">Part of the ABC transporter complex MetNIQ involved in methionine import. Responsible for energy coupling to the transport system.</text>
</comment>
<comment type="catalytic activity">
    <reaction evidence="1">
        <text>L-methionine(out) + ATP + H2O = L-methionine(in) + ADP + phosphate + H(+)</text>
        <dbReference type="Rhea" id="RHEA:29779"/>
        <dbReference type="ChEBI" id="CHEBI:15377"/>
        <dbReference type="ChEBI" id="CHEBI:15378"/>
        <dbReference type="ChEBI" id="CHEBI:30616"/>
        <dbReference type="ChEBI" id="CHEBI:43474"/>
        <dbReference type="ChEBI" id="CHEBI:57844"/>
        <dbReference type="ChEBI" id="CHEBI:456216"/>
        <dbReference type="EC" id="7.4.2.11"/>
    </reaction>
</comment>
<comment type="catalytic activity">
    <reaction evidence="1">
        <text>D-methionine(out) + ATP + H2O = D-methionine(in) + ADP + phosphate + H(+)</text>
        <dbReference type="Rhea" id="RHEA:29767"/>
        <dbReference type="ChEBI" id="CHEBI:15377"/>
        <dbReference type="ChEBI" id="CHEBI:15378"/>
        <dbReference type="ChEBI" id="CHEBI:30616"/>
        <dbReference type="ChEBI" id="CHEBI:43474"/>
        <dbReference type="ChEBI" id="CHEBI:57932"/>
        <dbReference type="ChEBI" id="CHEBI:456216"/>
        <dbReference type="EC" id="7.4.2.11"/>
    </reaction>
</comment>
<comment type="subunit">
    <text evidence="1">The complex is composed of two ATP-binding proteins (MetN), two transmembrane proteins (MetI) and a solute-binding protein (MetQ).</text>
</comment>
<comment type="subcellular location">
    <subcellularLocation>
        <location evidence="1">Cell membrane</location>
        <topology evidence="1">Peripheral membrane protein</topology>
    </subcellularLocation>
</comment>
<comment type="similarity">
    <text evidence="1">Belongs to the ABC transporter superfamily. Methionine importer (TC 3.A.1.24) family.</text>
</comment>
<gene>
    <name evidence="1" type="primary">metN2</name>
    <name type="ordered locus">SAB0768</name>
</gene>
<sequence length="341" mass="38280">MIELKEVVKEYRTKNKEVLAVDHVNLSIRAGSIYGVIGFSGAGKSTLIRMFNHLEAPTSGEVIIDGDHIGQLSKNGLRAKRQKVSMIFQHFNLLWSRTVLKNIMFPLEIAGVPRRRAKQKALELVELVGLKGREKAYPSELSGGQKQRVGIARALANDPTVLLCDEATSALDPQTTDEILDLLLKIREQQNLTIVLITHEMHVIRRICDEVAVMESGKVIEHGPVTQVFENPQHTVTKRFVKEDLNDDFETSLTELEPLEKYAYIVRLVFAGSTTTEPIVSSLSTAYDIKINILEANIKNTKNGTVGFLVLHIPYISSVDFGKFEKELIERQVKMEVLRHG</sequence>
<protein>
    <recommendedName>
        <fullName evidence="1">Methionine import ATP-binding protein MetN 2</fullName>
        <ecNumber evidence="1">7.4.2.11</ecNumber>
    </recommendedName>
</protein>
<feature type="chain" id="PRO_0000270388" description="Methionine import ATP-binding protein MetN 2">
    <location>
        <begin position="1"/>
        <end position="341"/>
    </location>
</feature>
<feature type="domain" description="ABC transporter" evidence="1">
    <location>
        <begin position="2"/>
        <end position="241"/>
    </location>
</feature>
<feature type="binding site" evidence="1">
    <location>
        <begin position="38"/>
        <end position="45"/>
    </location>
    <ligand>
        <name>ATP</name>
        <dbReference type="ChEBI" id="CHEBI:30616"/>
    </ligand>
</feature>
<reference key="1">
    <citation type="journal article" date="2007" name="PLoS ONE">
        <title>Molecular correlates of host specialization in Staphylococcus aureus.</title>
        <authorList>
            <person name="Herron-Olson L."/>
            <person name="Fitzgerald J.R."/>
            <person name="Musser J.M."/>
            <person name="Kapur V."/>
        </authorList>
    </citation>
    <scope>NUCLEOTIDE SEQUENCE [LARGE SCALE GENOMIC DNA]</scope>
    <source>
        <strain>bovine RF122 / ET3-1</strain>
    </source>
</reference>
<proteinExistence type="inferred from homology"/>
<evidence type="ECO:0000255" key="1">
    <source>
        <dbReference type="HAMAP-Rule" id="MF_01719"/>
    </source>
</evidence>
<name>METN2_STAAB</name>
<dbReference type="EC" id="7.4.2.11" evidence="1"/>
<dbReference type="EMBL" id="AJ938182">
    <property type="protein sequence ID" value="CAI80456.1"/>
    <property type="molecule type" value="Genomic_DNA"/>
</dbReference>
<dbReference type="RefSeq" id="WP_000571215.1">
    <property type="nucleotide sequence ID" value="NC_007622.1"/>
</dbReference>
<dbReference type="SMR" id="Q2YWP2"/>
<dbReference type="KEGG" id="sab:SAB0768"/>
<dbReference type="HOGENOM" id="CLU_000604_1_3_9"/>
<dbReference type="GO" id="GO:0005886">
    <property type="term" value="C:plasma membrane"/>
    <property type="evidence" value="ECO:0007669"/>
    <property type="project" value="UniProtKB-SubCell"/>
</dbReference>
<dbReference type="GO" id="GO:0033232">
    <property type="term" value="F:ABC-type D-methionine transporter activity"/>
    <property type="evidence" value="ECO:0007669"/>
    <property type="project" value="UniProtKB-EC"/>
</dbReference>
<dbReference type="GO" id="GO:0005524">
    <property type="term" value="F:ATP binding"/>
    <property type="evidence" value="ECO:0007669"/>
    <property type="project" value="UniProtKB-KW"/>
</dbReference>
<dbReference type="GO" id="GO:0016887">
    <property type="term" value="F:ATP hydrolysis activity"/>
    <property type="evidence" value="ECO:0007669"/>
    <property type="project" value="InterPro"/>
</dbReference>
<dbReference type="CDD" id="cd03258">
    <property type="entry name" value="ABC_MetN_methionine_transporter"/>
    <property type="match status" value="1"/>
</dbReference>
<dbReference type="FunFam" id="3.40.50.300:FF:000056">
    <property type="entry name" value="Cell division ATP-binding protein FtsE"/>
    <property type="match status" value="1"/>
</dbReference>
<dbReference type="Gene3D" id="3.30.70.260">
    <property type="match status" value="1"/>
</dbReference>
<dbReference type="Gene3D" id="3.40.50.300">
    <property type="entry name" value="P-loop containing nucleotide triphosphate hydrolases"/>
    <property type="match status" value="1"/>
</dbReference>
<dbReference type="InterPro" id="IPR003593">
    <property type="entry name" value="AAA+_ATPase"/>
</dbReference>
<dbReference type="InterPro" id="IPR003439">
    <property type="entry name" value="ABC_transporter-like_ATP-bd"/>
</dbReference>
<dbReference type="InterPro" id="IPR017871">
    <property type="entry name" value="ABC_transporter-like_CS"/>
</dbReference>
<dbReference type="InterPro" id="IPR045865">
    <property type="entry name" value="ACT-like_dom_sf"/>
</dbReference>
<dbReference type="InterPro" id="IPR041701">
    <property type="entry name" value="MetN_ABC"/>
</dbReference>
<dbReference type="InterPro" id="IPR050086">
    <property type="entry name" value="MetN_ABC_transporter-like"/>
</dbReference>
<dbReference type="InterPro" id="IPR018449">
    <property type="entry name" value="NIL_domain"/>
</dbReference>
<dbReference type="InterPro" id="IPR027417">
    <property type="entry name" value="P-loop_NTPase"/>
</dbReference>
<dbReference type="PANTHER" id="PTHR43166">
    <property type="entry name" value="AMINO ACID IMPORT ATP-BINDING PROTEIN"/>
    <property type="match status" value="1"/>
</dbReference>
<dbReference type="PANTHER" id="PTHR43166:SF36">
    <property type="entry name" value="METHIONINE IMPORT ATP-BINDING PROTEIN METN 2"/>
    <property type="match status" value="1"/>
</dbReference>
<dbReference type="Pfam" id="PF00005">
    <property type="entry name" value="ABC_tran"/>
    <property type="match status" value="1"/>
</dbReference>
<dbReference type="Pfam" id="PF09383">
    <property type="entry name" value="NIL"/>
    <property type="match status" value="1"/>
</dbReference>
<dbReference type="SMART" id="SM00382">
    <property type="entry name" value="AAA"/>
    <property type="match status" value="1"/>
</dbReference>
<dbReference type="SMART" id="SM00930">
    <property type="entry name" value="NIL"/>
    <property type="match status" value="1"/>
</dbReference>
<dbReference type="SUPFAM" id="SSF55021">
    <property type="entry name" value="ACT-like"/>
    <property type="match status" value="1"/>
</dbReference>
<dbReference type="SUPFAM" id="SSF52540">
    <property type="entry name" value="P-loop containing nucleoside triphosphate hydrolases"/>
    <property type="match status" value="1"/>
</dbReference>
<dbReference type="PROSITE" id="PS00211">
    <property type="entry name" value="ABC_TRANSPORTER_1"/>
    <property type="match status" value="1"/>
</dbReference>
<dbReference type="PROSITE" id="PS50893">
    <property type="entry name" value="ABC_TRANSPORTER_2"/>
    <property type="match status" value="1"/>
</dbReference>
<dbReference type="PROSITE" id="PS51264">
    <property type="entry name" value="METN"/>
    <property type="match status" value="1"/>
</dbReference>
<accession>Q2YWP2</accession>